<name>PUR7_SHOC1</name>
<sequence>MVKGELLYEGKAKRIFRSSEEGELWVEYKDDATAFNGEKKETLAGKARLNNDISSLIFATLAKKGIPSHFIRRLSDTEQLVKQVDIIPLEVVVRNVVAGSMAKRLGIEEGIALKKPLVEFYYKDDALGDPLVTEDHIAILDVAAAEEVAQLKQMAAAVNNELIELFATVGVQLIDFKLEFGRTQAGELLLADEISPDTCRLWDKDTKERFDKDLFRRNLGNLQEGYQEILSRLGGLYHV</sequence>
<feature type="chain" id="PRO_1000018670" description="Phosphoribosylaminoimidazole-succinocarboxamide synthase">
    <location>
        <begin position="1"/>
        <end position="239"/>
    </location>
</feature>
<comment type="catalytic activity">
    <reaction evidence="1">
        <text>5-amino-1-(5-phospho-D-ribosyl)imidazole-4-carboxylate + L-aspartate + ATP = (2S)-2-[5-amino-1-(5-phospho-beta-D-ribosyl)imidazole-4-carboxamido]succinate + ADP + phosphate + 2 H(+)</text>
        <dbReference type="Rhea" id="RHEA:22628"/>
        <dbReference type="ChEBI" id="CHEBI:15378"/>
        <dbReference type="ChEBI" id="CHEBI:29991"/>
        <dbReference type="ChEBI" id="CHEBI:30616"/>
        <dbReference type="ChEBI" id="CHEBI:43474"/>
        <dbReference type="ChEBI" id="CHEBI:58443"/>
        <dbReference type="ChEBI" id="CHEBI:77657"/>
        <dbReference type="ChEBI" id="CHEBI:456216"/>
        <dbReference type="EC" id="6.3.2.6"/>
    </reaction>
</comment>
<comment type="pathway">
    <text evidence="1">Purine metabolism; IMP biosynthesis via de novo pathway; 5-amino-1-(5-phospho-D-ribosyl)imidazole-4-carboxamide from 5-amino-1-(5-phospho-D-ribosyl)imidazole-4-carboxylate: step 1/2.</text>
</comment>
<comment type="similarity">
    <text evidence="1">Belongs to the SAICAR synthetase family.</text>
</comment>
<keyword id="KW-0067">ATP-binding</keyword>
<keyword id="KW-0436">Ligase</keyword>
<keyword id="KW-0547">Nucleotide-binding</keyword>
<keyword id="KW-0658">Purine biosynthesis</keyword>
<keyword id="KW-1185">Reference proteome</keyword>
<accession>Q5WJ89</accession>
<proteinExistence type="inferred from homology"/>
<organism>
    <name type="scientific">Shouchella clausii (strain KSM-K16)</name>
    <name type="common">Alkalihalobacillus clausii</name>
    <dbReference type="NCBI Taxonomy" id="66692"/>
    <lineage>
        <taxon>Bacteria</taxon>
        <taxon>Bacillati</taxon>
        <taxon>Bacillota</taxon>
        <taxon>Bacilli</taxon>
        <taxon>Bacillales</taxon>
        <taxon>Bacillaceae</taxon>
        <taxon>Shouchella</taxon>
    </lineage>
</organism>
<evidence type="ECO:0000255" key="1">
    <source>
        <dbReference type="HAMAP-Rule" id="MF_00137"/>
    </source>
</evidence>
<dbReference type="EC" id="6.3.2.6" evidence="1"/>
<dbReference type="EMBL" id="AP006627">
    <property type="protein sequence ID" value="BAD63566.1"/>
    <property type="molecule type" value="Genomic_DNA"/>
</dbReference>
<dbReference type="RefSeq" id="WP_011245882.1">
    <property type="nucleotide sequence ID" value="NC_006582.1"/>
</dbReference>
<dbReference type="SMR" id="Q5WJ89"/>
<dbReference type="STRING" id="66692.ABC1027"/>
<dbReference type="KEGG" id="bcl:ABC1027"/>
<dbReference type="eggNOG" id="COG0152">
    <property type="taxonomic scope" value="Bacteria"/>
</dbReference>
<dbReference type="HOGENOM" id="CLU_061495_2_0_9"/>
<dbReference type="OrthoDB" id="9801549at2"/>
<dbReference type="UniPathway" id="UPA00074">
    <property type="reaction ID" value="UER00131"/>
</dbReference>
<dbReference type="Proteomes" id="UP000001168">
    <property type="component" value="Chromosome"/>
</dbReference>
<dbReference type="GO" id="GO:0005524">
    <property type="term" value="F:ATP binding"/>
    <property type="evidence" value="ECO:0007669"/>
    <property type="project" value="UniProtKB-KW"/>
</dbReference>
<dbReference type="GO" id="GO:0004639">
    <property type="term" value="F:phosphoribosylaminoimidazolesuccinocarboxamide synthase activity"/>
    <property type="evidence" value="ECO:0007669"/>
    <property type="project" value="UniProtKB-UniRule"/>
</dbReference>
<dbReference type="GO" id="GO:0006189">
    <property type="term" value="P:'de novo' IMP biosynthetic process"/>
    <property type="evidence" value="ECO:0007669"/>
    <property type="project" value="UniProtKB-UniRule"/>
</dbReference>
<dbReference type="GO" id="GO:0009236">
    <property type="term" value="P:cobalamin biosynthetic process"/>
    <property type="evidence" value="ECO:0007669"/>
    <property type="project" value="InterPro"/>
</dbReference>
<dbReference type="CDD" id="cd01415">
    <property type="entry name" value="SAICAR_synt_PurC"/>
    <property type="match status" value="1"/>
</dbReference>
<dbReference type="FunFam" id="3.30.470.20:FF:000006">
    <property type="entry name" value="Phosphoribosylaminoimidazole-succinocarboxamide synthase"/>
    <property type="match status" value="1"/>
</dbReference>
<dbReference type="Gene3D" id="3.30.470.20">
    <property type="entry name" value="ATP-grasp fold, B domain"/>
    <property type="match status" value="1"/>
</dbReference>
<dbReference type="Gene3D" id="3.30.200.20">
    <property type="entry name" value="Phosphorylase Kinase, domain 1"/>
    <property type="match status" value="1"/>
</dbReference>
<dbReference type="HAMAP" id="MF_00137">
    <property type="entry name" value="SAICAR_synth"/>
    <property type="match status" value="1"/>
</dbReference>
<dbReference type="InterPro" id="IPR028923">
    <property type="entry name" value="SAICAR_synt/ADE2_N"/>
</dbReference>
<dbReference type="InterPro" id="IPR033934">
    <property type="entry name" value="SAICAR_synt_PurC"/>
</dbReference>
<dbReference type="InterPro" id="IPR001636">
    <property type="entry name" value="SAICAR_synth"/>
</dbReference>
<dbReference type="InterPro" id="IPR050089">
    <property type="entry name" value="SAICAR_synthetase"/>
</dbReference>
<dbReference type="InterPro" id="IPR018236">
    <property type="entry name" value="SAICAR_synthetase_CS"/>
</dbReference>
<dbReference type="NCBIfam" id="TIGR00081">
    <property type="entry name" value="purC"/>
    <property type="match status" value="1"/>
</dbReference>
<dbReference type="PANTHER" id="PTHR43599">
    <property type="entry name" value="MULTIFUNCTIONAL PROTEIN ADE2"/>
    <property type="match status" value="1"/>
</dbReference>
<dbReference type="PANTHER" id="PTHR43599:SF3">
    <property type="entry name" value="SI:DKEY-6E2.2"/>
    <property type="match status" value="1"/>
</dbReference>
<dbReference type="Pfam" id="PF01259">
    <property type="entry name" value="SAICAR_synt"/>
    <property type="match status" value="1"/>
</dbReference>
<dbReference type="SUPFAM" id="SSF56104">
    <property type="entry name" value="SAICAR synthase-like"/>
    <property type="match status" value="1"/>
</dbReference>
<dbReference type="PROSITE" id="PS01057">
    <property type="entry name" value="SAICAR_SYNTHETASE_1"/>
    <property type="match status" value="1"/>
</dbReference>
<dbReference type="PROSITE" id="PS01058">
    <property type="entry name" value="SAICAR_SYNTHETASE_2"/>
    <property type="match status" value="1"/>
</dbReference>
<gene>
    <name evidence="1" type="primary">purC</name>
    <name type="ordered locus">ABC1027</name>
</gene>
<reference key="1">
    <citation type="submission" date="2003-10" db="EMBL/GenBank/DDBJ databases">
        <title>The complete genome sequence of the alkaliphilic Bacillus clausii KSM-K16.</title>
        <authorList>
            <person name="Takaki Y."/>
            <person name="Kageyama Y."/>
            <person name="Shimamura S."/>
            <person name="Suzuki H."/>
            <person name="Nishi S."/>
            <person name="Hatada Y."/>
            <person name="Kawai S."/>
            <person name="Ito S."/>
            <person name="Horikoshi K."/>
        </authorList>
    </citation>
    <scope>NUCLEOTIDE SEQUENCE [LARGE SCALE GENOMIC DNA]</scope>
    <source>
        <strain>KSM-K16</strain>
    </source>
</reference>
<protein>
    <recommendedName>
        <fullName evidence="1">Phosphoribosylaminoimidazole-succinocarboxamide synthase</fullName>
        <ecNumber evidence="1">6.3.2.6</ecNumber>
    </recommendedName>
    <alternativeName>
        <fullName evidence="1">SAICAR synthetase</fullName>
    </alternativeName>
</protein>